<dbReference type="EMBL" id="Z49652">
    <property type="status" value="NOT_ANNOTATED_CDS"/>
    <property type="molecule type" value="Genomic_DNA"/>
</dbReference>
<dbReference type="EMBL" id="BK006943">
    <property type="protein sequence ID" value="DAA08936.1"/>
    <property type="molecule type" value="Genomic_DNA"/>
</dbReference>
<dbReference type="RefSeq" id="NP_878108.1">
    <property type="nucleotide sequence ID" value="NM_001184556.1"/>
</dbReference>
<dbReference type="BioGRID" id="37013">
    <property type="interactions" value="28"/>
</dbReference>
<dbReference type="FunCoup" id="Q3E775">
    <property type="interactions" value="5"/>
</dbReference>
<dbReference type="EnsemblFungi" id="YJR151W-A_mRNA">
    <property type="protein sequence ID" value="YJR151W-A"/>
    <property type="gene ID" value="YJR151W-A"/>
</dbReference>
<dbReference type="GeneID" id="1466471"/>
<dbReference type="KEGG" id="sce:YJR151W-A"/>
<dbReference type="AGR" id="SGD:S000028557"/>
<dbReference type="SGD" id="S000028557">
    <property type="gene designation" value="YJR151W-A"/>
</dbReference>
<dbReference type="VEuPathDB" id="FungiDB:YJR151W-A"/>
<dbReference type="HOGENOM" id="CLU_3433200_0_0_1"/>
<dbReference type="InParanoid" id="Q3E775"/>
<dbReference type="BioCyc" id="YEAST:G3O-31806-MONOMER"/>
<dbReference type="PRO" id="PR:Q3E775"/>
<dbReference type="Proteomes" id="UP000002311">
    <property type="component" value="Chromosome X"/>
</dbReference>
<name>YJ151_YEAST</name>
<organism>
    <name type="scientific">Saccharomyces cerevisiae (strain ATCC 204508 / S288c)</name>
    <name type="common">Baker's yeast</name>
    <dbReference type="NCBI Taxonomy" id="559292"/>
    <lineage>
        <taxon>Eukaryota</taxon>
        <taxon>Fungi</taxon>
        <taxon>Dikarya</taxon>
        <taxon>Ascomycota</taxon>
        <taxon>Saccharomycotina</taxon>
        <taxon>Saccharomycetes</taxon>
        <taxon>Saccharomycetales</taxon>
        <taxon>Saccharomycetaceae</taxon>
        <taxon>Saccharomyces</taxon>
    </lineage>
</organism>
<gene>
    <name type="ordered locus">YJR151W-A</name>
</gene>
<sequence length="16" mass="1976">MLSLIFYLRFPSYIRG</sequence>
<feature type="chain" id="PRO_0000245417" description="Uncharacterized protein YJR151W-A">
    <location>
        <begin position="1"/>
        <end position="16"/>
    </location>
</feature>
<accession>Q3E775</accession>
<accession>D6VWX0</accession>
<protein>
    <recommendedName>
        <fullName>Uncharacterized protein YJR151W-A</fullName>
    </recommendedName>
</protein>
<proteinExistence type="evidence at transcript level"/>
<reference key="1">
    <citation type="journal article" date="1996" name="EMBO J.">
        <title>Complete nucleotide sequence of Saccharomyces cerevisiae chromosome X.</title>
        <authorList>
            <person name="Galibert F."/>
            <person name="Alexandraki D."/>
            <person name="Baur A."/>
            <person name="Boles E."/>
            <person name="Chalwatzis N."/>
            <person name="Chuat J.-C."/>
            <person name="Coster F."/>
            <person name="Cziepluch C."/>
            <person name="de Haan M."/>
            <person name="Domdey H."/>
            <person name="Durand P."/>
            <person name="Entian K.-D."/>
            <person name="Gatius M."/>
            <person name="Goffeau A."/>
            <person name="Grivell L.A."/>
            <person name="Hennemann A."/>
            <person name="Herbert C.J."/>
            <person name="Heumann K."/>
            <person name="Hilger F."/>
            <person name="Hollenberg C.P."/>
            <person name="Huang M.-E."/>
            <person name="Jacq C."/>
            <person name="Jauniaux J.-C."/>
            <person name="Katsoulou C."/>
            <person name="Kirchrath L."/>
            <person name="Kleine K."/>
            <person name="Kordes E."/>
            <person name="Koetter P."/>
            <person name="Liebl S."/>
            <person name="Louis E.J."/>
            <person name="Manus V."/>
            <person name="Mewes H.-W."/>
            <person name="Miosga T."/>
            <person name="Obermaier B."/>
            <person name="Perea J."/>
            <person name="Pohl T.M."/>
            <person name="Portetelle D."/>
            <person name="Pujol A."/>
            <person name="Purnelle B."/>
            <person name="Ramezani Rad M."/>
            <person name="Rasmussen S.W."/>
            <person name="Rose M."/>
            <person name="Rossau R."/>
            <person name="Schaaff-Gerstenschlaeger I."/>
            <person name="Smits P.H.M."/>
            <person name="Scarcez T."/>
            <person name="Soriano N."/>
            <person name="To Van D."/>
            <person name="Tzermia M."/>
            <person name="Van Broekhoven A."/>
            <person name="Vandenbol M."/>
            <person name="Wedler H."/>
            <person name="von Wettstein D."/>
            <person name="Wambutt R."/>
            <person name="Zagulski M."/>
            <person name="Zollner A."/>
            <person name="Karpfinger-Hartl L."/>
        </authorList>
    </citation>
    <scope>NUCLEOTIDE SEQUENCE [LARGE SCALE GENOMIC DNA]</scope>
    <source>
        <strain>ATCC 204508 / S288c</strain>
    </source>
</reference>
<reference key="2">
    <citation type="journal article" date="2014" name="G3 (Bethesda)">
        <title>The reference genome sequence of Saccharomyces cerevisiae: Then and now.</title>
        <authorList>
            <person name="Engel S.R."/>
            <person name="Dietrich F.S."/>
            <person name="Fisk D.G."/>
            <person name="Binkley G."/>
            <person name="Balakrishnan R."/>
            <person name="Costanzo M.C."/>
            <person name="Dwight S.S."/>
            <person name="Hitz B.C."/>
            <person name="Karra K."/>
            <person name="Nash R.S."/>
            <person name="Weng S."/>
            <person name="Wong E.D."/>
            <person name="Lloyd P."/>
            <person name="Skrzypek M.S."/>
            <person name="Miyasato S.R."/>
            <person name="Simison M."/>
            <person name="Cherry J.M."/>
        </authorList>
    </citation>
    <scope>GENOME REANNOTATION</scope>
    <source>
        <strain>ATCC 204508 / S288c</strain>
    </source>
</reference>
<reference key="3">
    <citation type="journal article" date="2003" name="Genome Res.">
        <title>Systematic discovery of new genes in the Saccharomyces cerevisiae genome.</title>
        <authorList>
            <person name="Kessler M.M."/>
            <person name="Zeng Q."/>
            <person name="Hogan S."/>
            <person name="Cook R."/>
            <person name="Morales A.J."/>
            <person name="Cottarel G."/>
        </authorList>
    </citation>
    <scope>GENOME REANNOTATION</scope>
</reference>
<keyword id="KW-1185">Reference proteome</keyword>